<accession>C3N783</accession>
<reference key="1">
    <citation type="journal article" date="2009" name="Proc. Natl. Acad. Sci. U.S.A.">
        <title>Biogeography of the Sulfolobus islandicus pan-genome.</title>
        <authorList>
            <person name="Reno M.L."/>
            <person name="Held N.L."/>
            <person name="Fields C.J."/>
            <person name="Burke P.V."/>
            <person name="Whitaker R.J."/>
        </authorList>
    </citation>
    <scope>NUCLEOTIDE SEQUENCE [LARGE SCALE GENOMIC DNA]</scope>
    <source>
        <strain>Y.G.57.14 / Yellowstone #1</strain>
    </source>
</reference>
<comment type="function">
    <text evidence="1">Catalyzes the formation of 2-amino-5-formylamino-6-ribofuranosylamino-4(3H)-pyrimidinone ribonucleotide monophosphate and inorganic phosphate from GTP. Also has an independent pyrophosphate phosphohydrolase activity.</text>
</comment>
<comment type="catalytic activity">
    <reaction evidence="1">
        <text>GTP + 3 H2O = 2-amino-5-formylamino-6-(5-phospho-D-ribosylamino)pyrimidin-4(3H)-one + 2 phosphate + 2 H(+)</text>
        <dbReference type="Rhea" id="RHEA:22468"/>
        <dbReference type="ChEBI" id="CHEBI:15377"/>
        <dbReference type="ChEBI" id="CHEBI:15378"/>
        <dbReference type="ChEBI" id="CHEBI:37565"/>
        <dbReference type="ChEBI" id="CHEBI:43474"/>
        <dbReference type="ChEBI" id="CHEBI:57258"/>
        <dbReference type="EC" id="3.5.4.29"/>
    </reaction>
</comment>
<comment type="similarity">
    <text evidence="1">Belongs to the archaeal-type GTP cyclohydrolase family.</text>
</comment>
<name>GCH3_SACI7</name>
<gene>
    <name evidence="1" type="primary">gch3</name>
    <name type="ordered locus">YG5714_1820</name>
</gene>
<organism>
    <name type="scientific">Saccharolobus islandicus (strain Y.G.57.14 / Yellowstone #1)</name>
    <name type="common">Sulfolobus islandicus</name>
    <dbReference type="NCBI Taxonomy" id="439386"/>
    <lineage>
        <taxon>Archaea</taxon>
        <taxon>Thermoproteota</taxon>
        <taxon>Thermoprotei</taxon>
        <taxon>Sulfolobales</taxon>
        <taxon>Sulfolobaceae</taxon>
        <taxon>Saccharolobus</taxon>
    </lineage>
</organism>
<sequence>MKVLAIKLVDYREWTERLGYDREWLIQKIQNKFMMKIHEIASQYSTFPLQLRFDNFLMIVDGITNTQLIYMINDMQENLPVGIKTCLGYGKTPLEAQWNASVCLNNKEDKFKEYVDEKIAALHFDINFNTEALKYTSLYDSFLEITNIYVDLSRFLYKIGGILQYLGGDNYLGFVSTNSVNKVIEKFSDDNKIKVGIGIGQNARTAIKLATTSLEKIRNNREKTWHIEEEYH</sequence>
<dbReference type="EC" id="3.5.4.29" evidence="1"/>
<dbReference type="EMBL" id="CP001403">
    <property type="protein sequence ID" value="ACP46077.1"/>
    <property type="molecule type" value="Genomic_DNA"/>
</dbReference>
<dbReference type="RefSeq" id="WP_012716367.1">
    <property type="nucleotide sequence ID" value="NC_012622.1"/>
</dbReference>
<dbReference type="SMR" id="C3N783"/>
<dbReference type="GeneID" id="7807220"/>
<dbReference type="KEGG" id="siy:YG5714_1820"/>
<dbReference type="HOGENOM" id="CLU_080076_0_0_2"/>
<dbReference type="Proteomes" id="UP000002308">
    <property type="component" value="Chromosome"/>
</dbReference>
<dbReference type="GO" id="GO:0005525">
    <property type="term" value="F:GTP binding"/>
    <property type="evidence" value="ECO:0007669"/>
    <property type="project" value="UniProtKB-KW"/>
</dbReference>
<dbReference type="GO" id="GO:0043740">
    <property type="term" value="F:GTP cyclohydrolase IIa activity"/>
    <property type="evidence" value="ECO:0007669"/>
    <property type="project" value="UniProtKB-EC"/>
</dbReference>
<dbReference type="GO" id="GO:0009058">
    <property type="term" value="P:biosynthetic process"/>
    <property type="evidence" value="ECO:0007669"/>
    <property type="project" value="InterPro"/>
</dbReference>
<dbReference type="Gene3D" id="3.30.70.270">
    <property type="match status" value="1"/>
</dbReference>
<dbReference type="Gene3D" id="3.30.70.1230">
    <property type="entry name" value="Nucleotide cyclase"/>
    <property type="match status" value="1"/>
</dbReference>
<dbReference type="HAMAP" id="MF_00608">
    <property type="entry name" value="GTP_cyclohydro_3"/>
    <property type="match status" value="1"/>
</dbReference>
<dbReference type="InterPro" id="IPR007839">
    <property type="entry name" value="GTP_CycHdrlase_3"/>
</dbReference>
<dbReference type="InterPro" id="IPR029787">
    <property type="entry name" value="Nucleotide_cyclase"/>
</dbReference>
<dbReference type="InterPro" id="IPR043128">
    <property type="entry name" value="Rev_trsase/Diguanyl_cyclase"/>
</dbReference>
<dbReference type="PANTHER" id="PTHR42202">
    <property type="entry name" value="GTP CYCLOHYDROLASE III"/>
    <property type="match status" value="1"/>
</dbReference>
<dbReference type="PANTHER" id="PTHR42202:SF1">
    <property type="entry name" value="GTP CYCLOHYDROLASE III"/>
    <property type="match status" value="1"/>
</dbReference>
<dbReference type="Pfam" id="PF05165">
    <property type="entry name" value="GCH_III"/>
    <property type="match status" value="1"/>
</dbReference>
<dbReference type="PIRSF" id="PIRSF009265">
    <property type="entry name" value="GTP_cyclohydro_3"/>
    <property type="match status" value="1"/>
</dbReference>
<protein>
    <recommendedName>
        <fullName evidence="1">GTP cyclohydrolase III</fullName>
        <ecNumber evidence="1">3.5.4.29</ecNumber>
    </recommendedName>
</protein>
<evidence type="ECO:0000255" key="1">
    <source>
        <dbReference type="HAMAP-Rule" id="MF_00608"/>
    </source>
</evidence>
<proteinExistence type="inferred from homology"/>
<keyword id="KW-0342">GTP-binding</keyword>
<keyword id="KW-0378">Hydrolase</keyword>
<keyword id="KW-0547">Nucleotide-binding</keyword>
<feature type="chain" id="PRO_1000212264" description="GTP cyclohydrolase III">
    <location>
        <begin position="1"/>
        <end position="232"/>
    </location>
</feature>